<reference key="1">
    <citation type="journal article" date="2005" name="J. Infect. Dis.">
        <title>Genome sequence of a serotype M28 strain of group A Streptococcus: potential new insights into puerperal sepsis and bacterial disease specificity.</title>
        <authorList>
            <person name="Green N.M."/>
            <person name="Zhang S."/>
            <person name="Porcella S.F."/>
            <person name="Nagiec M.J."/>
            <person name="Barbian K.D."/>
            <person name="Beres S.B."/>
            <person name="Lefebvre R.B."/>
            <person name="Musser J.M."/>
        </authorList>
    </citation>
    <scope>NUCLEOTIDE SEQUENCE [LARGE SCALE GENOMIC DNA]</scope>
    <source>
        <strain>MGAS6180</strain>
    </source>
</reference>
<keyword id="KW-0028">Amino-acid biosynthesis</keyword>
<keyword id="KW-0057">Aromatic amino acid biosynthesis</keyword>
<keyword id="KW-0521">NADP</keyword>
<keyword id="KW-0560">Oxidoreductase</keyword>
<name>AROE_STRPM</name>
<dbReference type="EC" id="1.1.1.25" evidence="1"/>
<dbReference type="EMBL" id="CP000056">
    <property type="protein sequence ID" value="AAX72454.1"/>
    <property type="molecule type" value="Genomic_DNA"/>
</dbReference>
<dbReference type="RefSeq" id="WP_011285026.1">
    <property type="nucleotide sequence ID" value="NC_007296.2"/>
</dbReference>
<dbReference type="SMR" id="Q48S56"/>
<dbReference type="KEGG" id="spb:M28_Spy1344"/>
<dbReference type="HOGENOM" id="CLU_044063_4_4_9"/>
<dbReference type="UniPathway" id="UPA00053">
    <property type="reaction ID" value="UER00087"/>
</dbReference>
<dbReference type="GO" id="GO:0050661">
    <property type="term" value="F:NADP binding"/>
    <property type="evidence" value="ECO:0007669"/>
    <property type="project" value="InterPro"/>
</dbReference>
<dbReference type="GO" id="GO:0004764">
    <property type="term" value="F:shikimate 3-dehydrogenase (NADP+) activity"/>
    <property type="evidence" value="ECO:0007669"/>
    <property type="project" value="UniProtKB-UniRule"/>
</dbReference>
<dbReference type="GO" id="GO:0008652">
    <property type="term" value="P:amino acid biosynthetic process"/>
    <property type="evidence" value="ECO:0007669"/>
    <property type="project" value="UniProtKB-KW"/>
</dbReference>
<dbReference type="GO" id="GO:0009073">
    <property type="term" value="P:aromatic amino acid family biosynthetic process"/>
    <property type="evidence" value="ECO:0007669"/>
    <property type="project" value="UniProtKB-KW"/>
</dbReference>
<dbReference type="GO" id="GO:0009423">
    <property type="term" value="P:chorismate biosynthetic process"/>
    <property type="evidence" value="ECO:0007669"/>
    <property type="project" value="UniProtKB-UniRule"/>
</dbReference>
<dbReference type="GO" id="GO:0019632">
    <property type="term" value="P:shikimate metabolic process"/>
    <property type="evidence" value="ECO:0007669"/>
    <property type="project" value="InterPro"/>
</dbReference>
<dbReference type="CDD" id="cd01065">
    <property type="entry name" value="NAD_bind_Shikimate_DH"/>
    <property type="match status" value="1"/>
</dbReference>
<dbReference type="FunFam" id="3.40.50.10860:FF:000004">
    <property type="entry name" value="Quinate/shikimate dehydrogenase"/>
    <property type="match status" value="1"/>
</dbReference>
<dbReference type="FunFam" id="3.40.50.720:FF:000086">
    <property type="entry name" value="Quinate/shikimate dehydrogenase"/>
    <property type="match status" value="1"/>
</dbReference>
<dbReference type="Gene3D" id="3.40.50.10860">
    <property type="entry name" value="Leucine Dehydrogenase, chain A, domain 1"/>
    <property type="match status" value="1"/>
</dbReference>
<dbReference type="Gene3D" id="3.40.50.720">
    <property type="entry name" value="NAD(P)-binding Rossmann-like Domain"/>
    <property type="match status" value="1"/>
</dbReference>
<dbReference type="HAMAP" id="MF_00222">
    <property type="entry name" value="Shikimate_DH_AroE"/>
    <property type="match status" value="1"/>
</dbReference>
<dbReference type="InterPro" id="IPR046346">
    <property type="entry name" value="Aminoacid_DH-like_N_sf"/>
</dbReference>
<dbReference type="InterPro" id="IPR036291">
    <property type="entry name" value="NAD(P)-bd_dom_sf"/>
</dbReference>
<dbReference type="InterPro" id="IPR041121">
    <property type="entry name" value="SDH_C"/>
</dbReference>
<dbReference type="InterPro" id="IPR011342">
    <property type="entry name" value="Shikimate_DH"/>
</dbReference>
<dbReference type="InterPro" id="IPR013708">
    <property type="entry name" value="Shikimate_DH-bd_N"/>
</dbReference>
<dbReference type="InterPro" id="IPR022893">
    <property type="entry name" value="Shikimate_DH_fam"/>
</dbReference>
<dbReference type="NCBIfam" id="TIGR00507">
    <property type="entry name" value="aroE"/>
    <property type="match status" value="1"/>
</dbReference>
<dbReference type="NCBIfam" id="NF001319">
    <property type="entry name" value="PRK00258.3-3"/>
    <property type="match status" value="1"/>
</dbReference>
<dbReference type="PANTHER" id="PTHR21089:SF1">
    <property type="entry name" value="BIFUNCTIONAL 3-DEHYDROQUINATE DEHYDRATASE_SHIKIMATE DEHYDROGENASE, CHLOROPLASTIC"/>
    <property type="match status" value="1"/>
</dbReference>
<dbReference type="PANTHER" id="PTHR21089">
    <property type="entry name" value="SHIKIMATE DEHYDROGENASE"/>
    <property type="match status" value="1"/>
</dbReference>
<dbReference type="Pfam" id="PF18317">
    <property type="entry name" value="SDH_C"/>
    <property type="match status" value="1"/>
</dbReference>
<dbReference type="Pfam" id="PF08501">
    <property type="entry name" value="Shikimate_dh_N"/>
    <property type="match status" value="1"/>
</dbReference>
<dbReference type="SUPFAM" id="SSF53223">
    <property type="entry name" value="Aminoacid dehydrogenase-like, N-terminal domain"/>
    <property type="match status" value="1"/>
</dbReference>
<dbReference type="SUPFAM" id="SSF51735">
    <property type="entry name" value="NAD(P)-binding Rossmann-fold domains"/>
    <property type="match status" value="1"/>
</dbReference>
<protein>
    <recommendedName>
        <fullName evidence="1">Shikimate dehydrogenase (NADP(+))</fullName>
        <shortName evidence="1">SDH</shortName>
        <ecNumber evidence="1">1.1.1.25</ecNumber>
    </recommendedName>
</protein>
<organism>
    <name type="scientific">Streptococcus pyogenes serotype M28 (strain MGAS6180)</name>
    <dbReference type="NCBI Taxonomy" id="319701"/>
    <lineage>
        <taxon>Bacteria</taxon>
        <taxon>Bacillati</taxon>
        <taxon>Bacillota</taxon>
        <taxon>Bacilli</taxon>
        <taxon>Lactobacillales</taxon>
        <taxon>Streptococcaceae</taxon>
        <taxon>Streptococcus</taxon>
    </lineage>
</organism>
<accession>Q48S56</accession>
<proteinExistence type="inferred from homology"/>
<evidence type="ECO:0000255" key="1">
    <source>
        <dbReference type="HAMAP-Rule" id="MF_00222"/>
    </source>
</evidence>
<sequence length="292" mass="31290">MSERLSGHTLLVSLLATPIRHSLSPKMHNEAYAKLGLDYAYLAFEVGTEQLADAVQGIRALGIRGSNVSMPNKEAILPLLDDLSPAAELVGAVNTVVNKDGKGHLVGHITDGIGALRALADEGVSVKNKIITLAGVGGAGKAIAVQLAFDGAKEIRLFNRQATRLSSVQKLVTKLNQLTRTKVTLQDLEDQTAFKEAIRESHLFIDATSVGMKPLENLSLITDPELIRPDLVVFDIVYSPAETKLLAFARQHGAQKVINGLGMVLYQGAEAFKLITGQDMPVDAIKPLLGDE</sequence>
<feature type="chain" id="PRO_1000021350" description="Shikimate dehydrogenase (NADP(+))">
    <location>
        <begin position="1"/>
        <end position="292"/>
    </location>
</feature>
<feature type="active site" description="Proton acceptor" evidence="1">
    <location>
        <position position="73"/>
    </location>
</feature>
<feature type="binding site" evidence="1">
    <location>
        <begin position="22"/>
        <end position="24"/>
    </location>
    <ligand>
        <name>shikimate</name>
        <dbReference type="ChEBI" id="CHEBI:36208"/>
    </ligand>
</feature>
<feature type="binding site" evidence="1">
    <location>
        <position position="69"/>
    </location>
    <ligand>
        <name>shikimate</name>
        <dbReference type="ChEBI" id="CHEBI:36208"/>
    </ligand>
</feature>
<feature type="binding site" evidence="1">
    <location>
        <position position="94"/>
    </location>
    <ligand>
        <name>shikimate</name>
        <dbReference type="ChEBI" id="CHEBI:36208"/>
    </ligand>
</feature>
<feature type="binding site" evidence="1">
    <location>
        <position position="111"/>
    </location>
    <ligand>
        <name>shikimate</name>
        <dbReference type="ChEBI" id="CHEBI:36208"/>
    </ligand>
</feature>
<feature type="binding site" evidence="1">
    <location>
        <begin position="135"/>
        <end position="139"/>
    </location>
    <ligand>
        <name>NADP(+)</name>
        <dbReference type="ChEBI" id="CHEBI:58349"/>
    </ligand>
</feature>
<feature type="binding site" evidence="1">
    <location>
        <position position="236"/>
    </location>
    <ligand>
        <name>NADP(+)</name>
        <dbReference type="ChEBI" id="CHEBI:58349"/>
    </ligand>
</feature>
<feature type="binding site" evidence="1">
    <location>
        <position position="238"/>
    </location>
    <ligand>
        <name>shikimate</name>
        <dbReference type="ChEBI" id="CHEBI:36208"/>
    </ligand>
</feature>
<feature type="binding site" evidence="1">
    <location>
        <position position="260"/>
    </location>
    <ligand>
        <name>NADP(+)</name>
        <dbReference type="ChEBI" id="CHEBI:58349"/>
    </ligand>
</feature>
<gene>
    <name evidence="1" type="primary">aroE</name>
    <name type="ordered locus">M28_Spy1344</name>
</gene>
<comment type="function">
    <text evidence="1">Involved in the biosynthesis of the chorismate, which leads to the biosynthesis of aromatic amino acids. Catalyzes the reversible NADPH linked reduction of 3-dehydroshikimate (DHSA) to yield shikimate (SA).</text>
</comment>
<comment type="catalytic activity">
    <reaction evidence="1">
        <text>shikimate + NADP(+) = 3-dehydroshikimate + NADPH + H(+)</text>
        <dbReference type="Rhea" id="RHEA:17737"/>
        <dbReference type="ChEBI" id="CHEBI:15378"/>
        <dbReference type="ChEBI" id="CHEBI:16630"/>
        <dbReference type="ChEBI" id="CHEBI:36208"/>
        <dbReference type="ChEBI" id="CHEBI:57783"/>
        <dbReference type="ChEBI" id="CHEBI:58349"/>
        <dbReference type="EC" id="1.1.1.25"/>
    </reaction>
</comment>
<comment type="pathway">
    <text evidence="1">Metabolic intermediate biosynthesis; chorismate biosynthesis; chorismate from D-erythrose 4-phosphate and phosphoenolpyruvate: step 4/7.</text>
</comment>
<comment type="subunit">
    <text evidence="1">Homodimer.</text>
</comment>
<comment type="similarity">
    <text evidence="1">Belongs to the shikimate dehydrogenase family.</text>
</comment>